<protein>
    <recommendedName>
        <fullName>Calponin-1</fullName>
    </recommendedName>
    <alternativeName>
        <fullName>Basic calponin</fullName>
    </alternativeName>
    <alternativeName>
        <fullName>Calponin H1, smooth muscle</fullName>
    </alternativeName>
</protein>
<comment type="function">
    <text evidence="1">Thin filament-associated protein that is implicated in the regulation and modulation of smooth muscle contraction. It is capable of binding to actin, calmodulin and tropomyosin. The interaction of calponin with actin inhibits the actomyosin Mg-ATPase activity (By similarity).</text>
</comment>
<comment type="subunit">
    <text evidence="1">Part of cGMP kinase signaling complex at least composed of ACTA2/alpha-actin, CNN1/calponin H1, PLN/phospholamban, PRKG1 and ITPR1.</text>
</comment>
<comment type="similarity">
    <text evidence="3">Belongs to the calponin family.</text>
</comment>
<organism>
    <name type="scientific">Ovis aries</name>
    <name type="common">Sheep</name>
    <dbReference type="NCBI Taxonomy" id="9940"/>
    <lineage>
        <taxon>Eukaryota</taxon>
        <taxon>Metazoa</taxon>
        <taxon>Chordata</taxon>
        <taxon>Craniata</taxon>
        <taxon>Vertebrata</taxon>
        <taxon>Euteleostomi</taxon>
        <taxon>Mammalia</taxon>
        <taxon>Eutheria</taxon>
        <taxon>Laurasiatheria</taxon>
        <taxon>Artiodactyla</taxon>
        <taxon>Ruminantia</taxon>
        <taxon>Pecora</taxon>
        <taxon>Bovidae</taxon>
        <taxon>Caprinae</taxon>
        <taxon>Ovis</taxon>
    </lineage>
</organism>
<reference key="1">
    <citation type="submission" date="2003-06" db="EMBL/GenBank/DDBJ databases">
        <authorList>
            <person name="Yue Z."/>
            <person name="Huang Z."/>
            <person name="Song J."/>
            <person name="Zhang Y."/>
            <person name="Liu H."/>
            <person name="Cheng H."/>
            <person name="Ma R.Z."/>
        </authorList>
    </citation>
    <scope>NUCLEOTIDE SEQUENCE [MRNA]</scope>
</reference>
<sequence length="297" mass="33255">MSSAHFNRGPAYGLSAEVKNKLAQKYDHQREQELREWIEGVTGRRIGNNFMDGLKDGIILCEFINKLQPGSVKKVNESTQNWHQLENIGNFIKAITKYGVKPHDIFEANDLFENTNHTQVQSTLLALASMAKTKGNKVNVGVKYAEKQERKFEPEKLREGRNIIGLQMGTNKFASQQGMTAYGTRRHLYDPKLGTDQPLDQATISLQMGTNKGASQAGMTAPGTKRQIFEPGLGMEHCDTLNVSLQMGSNKGASQRGMTVYGLPRQVYDPKYCLTPEYPELGEPAHNHHPHNYYNSA</sequence>
<keyword id="KW-0009">Actin-binding</keyword>
<keyword id="KW-0112">Calmodulin-binding</keyword>
<keyword id="KW-0597">Phosphoprotein</keyword>
<keyword id="KW-1185">Reference proteome</keyword>
<keyword id="KW-0677">Repeat</keyword>
<evidence type="ECO:0000250" key="1"/>
<evidence type="ECO:0000255" key="2">
    <source>
        <dbReference type="PROSITE-ProRule" id="PRU00044"/>
    </source>
</evidence>
<evidence type="ECO:0000305" key="3"/>
<name>CNN1_SHEEP</name>
<feature type="chain" id="PRO_0000232496" description="Calponin-1">
    <location>
        <begin position="1"/>
        <end position="297"/>
    </location>
</feature>
<feature type="domain" description="Calponin-homology (CH)" evidence="2">
    <location>
        <begin position="28"/>
        <end position="131"/>
    </location>
</feature>
<feature type="repeat" description="Calponin-like 1">
    <location>
        <begin position="164"/>
        <end position="189"/>
    </location>
</feature>
<feature type="repeat" description="Calponin-like 2">
    <location>
        <begin position="204"/>
        <end position="229"/>
    </location>
</feature>
<feature type="repeat" description="Calponin-like 3">
    <location>
        <begin position="243"/>
        <end position="268"/>
    </location>
</feature>
<feature type="modified residue" description="Phosphothreonine; by ROCK2" evidence="1">
    <location>
        <position position="170"/>
    </location>
</feature>
<feature type="modified residue" description="Phosphoserine; by ROCK2" evidence="1">
    <location>
        <position position="175"/>
    </location>
</feature>
<feature type="modified residue" description="Phosphothreonine; by ROCK2" evidence="1">
    <location>
        <position position="180"/>
    </location>
</feature>
<feature type="modified residue" description="Phosphothreonine; by ROCK2" evidence="1">
    <location>
        <position position="184"/>
    </location>
</feature>
<feature type="modified residue" description="Phosphothreonine; by ROCK2" evidence="1">
    <location>
        <position position="259"/>
    </location>
</feature>
<gene>
    <name type="primary">CNN1</name>
</gene>
<dbReference type="EMBL" id="AY327118">
    <property type="protein sequence ID" value="AAP88264.1"/>
    <property type="molecule type" value="mRNA"/>
</dbReference>
<dbReference type="RefSeq" id="NP_001009456.1">
    <property type="nucleotide sequence ID" value="NM_001009456.1"/>
</dbReference>
<dbReference type="SMR" id="Q7YRL2"/>
<dbReference type="STRING" id="9940.ENSOARP00000019989"/>
<dbReference type="PaxDb" id="9940-ENSOARP00000019989"/>
<dbReference type="Ensembl" id="ENSOART00185060543">
    <property type="protein sequence ID" value="ENSOARP00185030693"/>
    <property type="gene ID" value="ENSOARG00185036307"/>
</dbReference>
<dbReference type="Ensembl" id="ENSOART00215019029">
    <property type="protein sequence ID" value="ENSOARP00215009577"/>
    <property type="gene ID" value="ENSOARG00215011452"/>
</dbReference>
<dbReference type="Ensembl" id="ENSOART00220099491">
    <property type="protein sequence ID" value="ENSOARP00220051965"/>
    <property type="gene ID" value="ENSOARG00220060279"/>
</dbReference>
<dbReference type="GeneID" id="443517"/>
<dbReference type="KEGG" id="oas:443517"/>
<dbReference type="CTD" id="1264"/>
<dbReference type="eggNOG" id="KOG2046">
    <property type="taxonomic scope" value="Eukaryota"/>
</dbReference>
<dbReference type="HOGENOM" id="CLU_055232_0_0_1"/>
<dbReference type="OMA" id="GEPTHNH"/>
<dbReference type="OrthoDB" id="21595at2759"/>
<dbReference type="Proteomes" id="UP000002356">
    <property type="component" value="Chromosome 5"/>
</dbReference>
<dbReference type="Bgee" id="ENSOARG00000018621">
    <property type="expression patterns" value="Expressed in rectum and 51 other cell types or tissues"/>
</dbReference>
<dbReference type="GO" id="GO:0015629">
    <property type="term" value="C:actin cytoskeleton"/>
    <property type="evidence" value="ECO:0007669"/>
    <property type="project" value="TreeGrafter"/>
</dbReference>
<dbReference type="GO" id="GO:0051015">
    <property type="term" value="F:actin filament binding"/>
    <property type="evidence" value="ECO:0007669"/>
    <property type="project" value="TreeGrafter"/>
</dbReference>
<dbReference type="GO" id="GO:0005516">
    <property type="term" value="F:calmodulin binding"/>
    <property type="evidence" value="ECO:0007669"/>
    <property type="project" value="UniProtKB-KW"/>
</dbReference>
<dbReference type="GO" id="GO:0007015">
    <property type="term" value="P:actin filament organization"/>
    <property type="evidence" value="ECO:0007669"/>
    <property type="project" value="TreeGrafter"/>
</dbReference>
<dbReference type="GO" id="GO:0031032">
    <property type="term" value="P:actomyosin structure organization"/>
    <property type="evidence" value="ECO:0007669"/>
    <property type="project" value="InterPro"/>
</dbReference>
<dbReference type="GO" id="GO:1904706">
    <property type="term" value="P:negative regulation of vascular associated smooth muscle cell proliferation"/>
    <property type="evidence" value="ECO:0007669"/>
    <property type="project" value="Ensembl"/>
</dbReference>
<dbReference type="CDD" id="cd21282">
    <property type="entry name" value="CH_CNN1"/>
    <property type="match status" value="1"/>
</dbReference>
<dbReference type="FunFam" id="1.10.418.10:FF:000040">
    <property type="entry name" value="Calponin"/>
    <property type="match status" value="1"/>
</dbReference>
<dbReference type="Gene3D" id="1.10.418.10">
    <property type="entry name" value="Calponin-like domain"/>
    <property type="match status" value="1"/>
</dbReference>
<dbReference type="InterPro" id="IPR050606">
    <property type="entry name" value="Calponin-like"/>
</dbReference>
<dbReference type="InterPro" id="IPR001997">
    <property type="entry name" value="Calponin/LIMCH1"/>
</dbReference>
<dbReference type="InterPro" id="IPR000557">
    <property type="entry name" value="Calponin_repeat"/>
</dbReference>
<dbReference type="InterPro" id="IPR001715">
    <property type="entry name" value="CH_dom"/>
</dbReference>
<dbReference type="InterPro" id="IPR036872">
    <property type="entry name" value="CH_dom_sf"/>
</dbReference>
<dbReference type="InterPro" id="IPR003096">
    <property type="entry name" value="SM22_calponin"/>
</dbReference>
<dbReference type="PANTHER" id="PTHR47385">
    <property type="entry name" value="CALPONIN"/>
    <property type="match status" value="1"/>
</dbReference>
<dbReference type="PANTHER" id="PTHR47385:SF18">
    <property type="entry name" value="CALPONIN"/>
    <property type="match status" value="1"/>
</dbReference>
<dbReference type="Pfam" id="PF00402">
    <property type="entry name" value="Calponin"/>
    <property type="match status" value="3"/>
</dbReference>
<dbReference type="Pfam" id="PF00307">
    <property type="entry name" value="CH"/>
    <property type="match status" value="1"/>
</dbReference>
<dbReference type="PRINTS" id="PR00889">
    <property type="entry name" value="CALPONIN"/>
</dbReference>
<dbReference type="PRINTS" id="PR00888">
    <property type="entry name" value="SM22CALPONIN"/>
</dbReference>
<dbReference type="SMART" id="SM00033">
    <property type="entry name" value="CH"/>
    <property type="match status" value="1"/>
</dbReference>
<dbReference type="SUPFAM" id="SSF47576">
    <property type="entry name" value="Calponin-homology domain, CH-domain"/>
    <property type="match status" value="1"/>
</dbReference>
<dbReference type="PROSITE" id="PS01052">
    <property type="entry name" value="CALPONIN_1"/>
    <property type="match status" value="3"/>
</dbReference>
<dbReference type="PROSITE" id="PS51122">
    <property type="entry name" value="CALPONIN_2"/>
    <property type="match status" value="3"/>
</dbReference>
<dbReference type="PROSITE" id="PS50021">
    <property type="entry name" value="CH"/>
    <property type="match status" value="1"/>
</dbReference>
<accession>Q7YRL2</accession>
<proteinExistence type="evidence at transcript level"/>